<protein>
    <recommendedName>
        <fullName>Leucine-rich repeat extensin-like protein 5</fullName>
        <shortName>AtLRX5</shortName>
        <shortName>LRR/EXTENSIN5</shortName>
    </recommendedName>
    <alternativeName>
        <fullName>Cell wall hydroxyproline-rich glycoprotein</fullName>
    </alternativeName>
</protein>
<proteinExistence type="evidence at transcript level"/>
<accession>Q9SN46</accession>
<gene>
    <name type="primary">LRX5</name>
    <name type="ordered locus">At4g18670</name>
    <name type="ORF">F28A21.80</name>
</gene>
<evidence type="ECO:0000250" key="1"/>
<evidence type="ECO:0000255" key="2"/>
<evidence type="ECO:0000256" key="3">
    <source>
        <dbReference type="SAM" id="MobiDB-lite"/>
    </source>
</evidence>
<evidence type="ECO:0000269" key="4">
    <source>
    </source>
</evidence>
<evidence type="ECO:0000303" key="5">
    <source ref="3"/>
</evidence>
<evidence type="ECO:0000305" key="6"/>
<sequence>MKTKMMMKNTSLIFVLLFITFFFTSISYSLSLTFNGDLSDNEVRLITQRQLLYFRDEFGDRGENVDVDPSLVFENPRLRNAYIALQAWKQAILSDPNNFTTNWIGSDVCSYTGVYCAPALDNRRIRTVAGIDLNHADIAGYLPQELGLLTDLALFHINSNRFCGTVPHRFNRLKLLFELDLSNNRFAGIFPTVVLQLPSLKFLDLRFNEFEGPVPRELFSKDLDAIFINHNRFRFELPDNLGDSPVSVIVVANNHFHGCIPTSLGDMRNLEEIIFMENGFNSCLPSQIGRLKNVTVFDFSFNELVGSLPASIGGMVSMEQLNVAHNRFSGKIPATICQLPRLENFTFSYNFFTGEPPVCLGLPGFDDRRNCLPARPAQRSPGQCAAFSSLPPVDCGSFGCGRSTRPPVVVPSPPTTPSPGGSPPSPSISPSPPITVPSPPTTPSPGGSPPSPSIVPSPPSTTPSPGSPPTSPTTPTPGGSPPSSPTTPTPGGSPPSSPTTPTPGGSPPSSPTTPSPGGSPPSPSISPSPPITVPSPPSTPTSPGSPPSPSSPTPSSPIPSPPTPSTPPTPISPGQNSPPIIPSPPFTGPSPPSSPSPPLPPVIPSPPIVGPTPSSPPPSTPTPVYSPPPPSTGYPPPPPFTGYSPPSPPPPPPPTFSPSPSIPPPPPQTYSPFPPPPPPPPQTYYPPQPSPSQPPQSPIYGTPPPSPIPYLPSPPQFASPPPPAPYYYSSPQPPPPPHYSLPPPTPTYHYISPPPPPTPIHSPPPQSHPPCIEYSPPPPPTVHYNPPPPPSPAHYSPPPSPPVYYYNSPPPPPAVHYSPPPPPVIHHSQPPPPPIYEGPLPPIPGISYASPPPPPFY</sequence>
<name>LRX5_ARATH</name>
<feature type="signal peptide" evidence="2">
    <location>
        <begin position="1"/>
        <end position="31"/>
    </location>
</feature>
<feature type="chain" id="PRO_0000395465" description="Leucine-rich repeat extensin-like protein 5">
    <location>
        <begin position="32"/>
        <end position="857"/>
    </location>
</feature>
<feature type="repeat" description="LRR 1">
    <location>
        <begin position="32"/>
        <end position="53"/>
    </location>
</feature>
<feature type="repeat" description="LRR 2">
    <location>
        <begin position="125"/>
        <end position="149"/>
    </location>
</feature>
<feature type="repeat" description="LRR 3">
    <location>
        <begin position="150"/>
        <end position="172"/>
    </location>
</feature>
<feature type="repeat" description="LRR 4">
    <location>
        <begin position="174"/>
        <end position="197"/>
    </location>
</feature>
<feature type="repeat" description="LRR 5">
    <location>
        <begin position="198"/>
        <end position="221"/>
    </location>
</feature>
<feature type="repeat" description="LRR 6">
    <location>
        <begin position="223"/>
        <end position="244"/>
    </location>
</feature>
<feature type="repeat" description="LRR 7">
    <location>
        <begin position="246"/>
        <end position="267"/>
    </location>
</feature>
<feature type="repeat" description="LRR 8">
    <location>
        <begin position="268"/>
        <end position="291"/>
    </location>
</feature>
<feature type="repeat" description="LRR 9">
    <location>
        <begin position="292"/>
        <end position="315"/>
    </location>
</feature>
<feature type="repeat" description="LRR 10">
    <location>
        <begin position="316"/>
        <end position="339"/>
    </location>
</feature>
<feature type="repeat" description="LRR 11">
    <location>
        <begin position="341"/>
        <end position="362"/>
    </location>
</feature>
<feature type="region of interest" description="Disordered" evidence="3">
    <location>
        <begin position="406"/>
        <end position="776"/>
    </location>
</feature>
<feature type="region of interest" description="Contains the Ser-Pro(4) repeats">
    <location>
        <begin position="615"/>
        <end position="857"/>
    </location>
</feature>
<feature type="region of interest" description="Disordered" evidence="3">
    <location>
        <begin position="817"/>
        <end position="839"/>
    </location>
</feature>
<feature type="compositionally biased region" description="Pro residues" evidence="3">
    <location>
        <begin position="408"/>
        <end position="571"/>
    </location>
</feature>
<feature type="compositionally biased region" description="Pro residues" evidence="3">
    <location>
        <begin position="579"/>
        <end position="768"/>
    </location>
</feature>
<feature type="glycosylation site" description="N-linked (GlcNAc...) asparagine" evidence="2">
    <location>
        <position position="98"/>
    </location>
</feature>
<feature type="glycosylation site" description="N-linked (GlcNAc...) asparagine" evidence="2">
    <location>
        <position position="293"/>
    </location>
</feature>
<feature type="glycosylation site" description="N-linked (GlcNAc...) asparagine" evidence="2">
    <location>
        <position position="344"/>
    </location>
</feature>
<feature type="splice variant" id="VSP_039478" description="In isoform 2." evidence="5">
    <location>
        <begin position="380"/>
        <end position="450"/>
    </location>
</feature>
<feature type="sequence conflict" description="In Ref. 3; AK228621." evidence="6" ref="3">
    <original>R</original>
    <variation>K</variation>
    <location>
        <position position="379"/>
    </location>
</feature>
<comment type="function">
    <text evidence="1">Modulates cell morphogenesis by regulating cell wall formation and assembly, and/or growth polarization.</text>
</comment>
<comment type="subcellular location">
    <subcellularLocation>
        <location evidence="1">Secreted</location>
        <location evidence="1">Cell wall</location>
    </subcellularLocation>
</comment>
<comment type="alternative products">
    <event type="alternative splicing"/>
    <isoform>
        <id>Q9SN46-1</id>
        <name>1</name>
        <sequence type="displayed"/>
    </isoform>
    <isoform>
        <id>Q9SN46-2</id>
        <name>2</name>
        <sequence type="described" ref="VSP_039478"/>
    </isoform>
</comment>
<comment type="tissue specificity">
    <text evidence="4">Expressed in roots, leaves and flowers.</text>
</comment>
<comment type="developmental stage">
    <text evidence="4">Observed in emerging secondary roots and young leaves. During flower development, restricted to carpels, stamen filament, and the abscission zone of the floral whorls.</text>
</comment>
<comment type="PTM">
    <text evidence="1">Hydroxylated on proline residues in the S-P-P-P-P repeat.</text>
</comment>
<comment type="PTM">
    <text evidence="1">O-glycosylated on hydroxyprolines.</text>
</comment>
<comment type="sequence caution" evidence="6">
    <conflict type="erroneous gene model prediction">
        <sequence resource="EMBL-CDS" id="CAB37452"/>
    </conflict>
</comment>
<comment type="sequence caution" evidence="6">
    <conflict type="frameshift">
        <sequence resource="EMBL-CDS" id="CAB37452"/>
    </conflict>
</comment>
<comment type="sequence caution" evidence="6">
    <conflict type="erroneous gene model prediction">
        <sequence resource="EMBL-CDS" id="CAB78869"/>
    </conflict>
</comment>
<comment type="sequence caution" evidence="6">
    <conflict type="frameshift">
        <sequence resource="EMBL-CDS" id="CAB78869"/>
    </conflict>
</comment>
<reference key="1">
    <citation type="journal article" date="1999" name="Nature">
        <title>Sequence and analysis of chromosome 4 of the plant Arabidopsis thaliana.</title>
        <authorList>
            <person name="Mayer K.F.X."/>
            <person name="Schueller C."/>
            <person name="Wambutt R."/>
            <person name="Murphy G."/>
            <person name="Volckaert G."/>
            <person name="Pohl T."/>
            <person name="Duesterhoeft A."/>
            <person name="Stiekema W."/>
            <person name="Entian K.-D."/>
            <person name="Terryn N."/>
            <person name="Harris B."/>
            <person name="Ansorge W."/>
            <person name="Brandt P."/>
            <person name="Grivell L.A."/>
            <person name="Rieger M."/>
            <person name="Weichselgartner M."/>
            <person name="de Simone V."/>
            <person name="Obermaier B."/>
            <person name="Mache R."/>
            <person name="Mueller M."/>
            <person name="Kreis M."/>
            <person name="Delseny M."/>
            <person name="Puigdomenech P."/>
            <person name="Watson M."/>
            <person name="Schmidtheini T."/>
            <person name="Reichert B."/>
            <person name="Portetelle D."/>
            <person name="Perez-Alonso M."/>
            <person name="Boutry M."/>
            <person name="Bancroft I."/>
            <person name="Vos P."/>
            <person name="Hoheisel J."/>
            <person name="Zimmermann W."/>
            <person name="Wedler H."/>
            <person name="Ridley P."/>
            <person name="Langham S.-A."/>
            <person name="McCullagh B."/>
            <person name="Bilham L."/>
            <person name="Robben J."/>
            <person name="van der Schueren J."/>
            <person name="Grymonprez B."/>
            <person name="Chuang Y.-J."/>
            <person name="Vandenbussche F."/>
            <person name="Braeken M."/>
            <person name="Weltjens I."/>
            <person name="Voet M."/>
            <person name="Bastiaens I."/>
            <person name="Aert R."/>
            <person name="Defoor E."/>
            <person name="Weitzenegger T."/>
            <person name="Bothe G."/>
            <person name="Ramsperger U."/>
            <person name="Hilbert H."/>
            <person name="Braun M."/>
            <person name="Holzer E."/>
            <person name="Brandt A."/>
            <person name="Peters S."/>
            <person name="van Staveren M."/>
            <person name="Dirkse W."/>
            <person name="Mooijman P."/>
            <person name="Klein Lankhorst R."/>
            <person name="Rose M."/>
            <person name="Hauf J."/>
            <person name="Koetter P."/>
            <person name="Berneiser S."/>
            <person name="Hempel S."/>
            <person name="Feldpausch M."/>
            <person name="Lamberth S."/>
            <person name="Van den Daele H."/>
            <person name="De Keyser A."/>
            <person name="Buysshaert C."/>
            <person name="Gielen J."/>
            <person name="Villarroel R."/>
            <person name="De Clercq R."/>
            <person name="van Montagu M."/>
            <person name="Rogers J."/>
            <person name="Cronin A."/>
            <person name="Quail M.A."/>
            <person name="Bray-Allen S."/>
            <person name="Clark L."/>
            <person name="Doggett J."/>
            <person name="Hall S."/>
            <person name="Kay M."/>
            <person name="Lennard N."/>
            <person name="McLay K."/>
            <person name="Mayes R."/>
            <person name="Pettett A."/>
            <person name="Rajandream M.A."/>
            <person name="Lyne M."/>
            <person name="Benes V."/>
            <person name="Rechmann S."/>
            <person name="Borkova D."/>
            <person name="Bloecker H."/>
            <person name="Scharfe M."/>
            <person name="Grimm M."/>
            <person name="Loehnert T.-H."/>
            <person name="Dose S."/>
            <person name="de Haan M."/>
            <person name="Maarse A.C."/>
            <person name="Schaefer M."/>
            <person name="Mueller-Auer S."/>
            <person name="Gabel C."/>
            <person name="Fuchs M."/>
            <person name="Fartmann B."/>
            <person name="Granderath K."/>
            <person name="Dauner D."/>
            <person name="Herzl A."/>
            <person name="Neumann S."/>
            <person name="Argiriou A."/>
            <person name="Vitale D."/>
            <person name="Liguori R."/>
            <person name="Piravandi E."/>
            <person name="Massenet O."/>
            <person name="Quigley F."/>
            <person name="Clabauld G."/>
            <person name="Muendlein A."/>
            <person name="Felber R."/>
            <person name="Schnabl S."/>
            <person name="Hiller R."/>
            <person name="Schmidt W."/>
            <person name="Lecharny A."/>
            <person name="Aubourg S."/>
            <person name="Chefdor F."/>
            <person name="Cooke R."/>
            <person name="Berger C."/>
            <person name="Monfort A."/>
            <person name="Casacuberta E."/>
            <person name="Gibbons T."/>
            <person name="Weber N."/>
            <person name="Vandenbol M."/>
            <person name="Bargues M."/>
            <person name="Terol J."/>
            <person name="Torres A."/>
            <person name="Perez-Perez A."/>
            <person name="Purnelle B."/>
            <person name="Bent E."/>
            <person name="Johnson S."/>
            <person name="Tacon D."/>
            <person name="Jesse T."/>
            <person name="Heijnen L."/>
            <person name="Schwarz S."/>
            <person name="Scholler P."/>
            <person name="Heber S."/>
            <person name="Francs P."/>
            <person name="Bielke C."/>
            <person name="Frishman D."/>
            <person name="Haase D."/>
            <person name="Lemcke K."/>
            <person name="Mewes H.-W."/>
            <person name="Stocker S."/>
            <person name="Zaccaria P."/>
            <person name="Bevan M."/>
            <person name="Wilson R.K."/>
            <person name="de la Bastide M."/>
            <person name="Habermann K."/>
            <person name="Parnell L."/>
            <person name="Dedhia N."/>
            <person name="Gnoj L."/>
            <person name="Schutz K."/>
            <person name="Huang E."/>
            <person name="Spiegel L."/>
            <person name="Sekhon M."/>
            <person name="Murray J."/>
            <person name="Sheet P."/>
            <person name="Cordes M."/>
            <person name="Abu-Threideh J."/>
            <person name="Stoneking T."/>
            <person name="Kalicki J."/>
            <person name="Graves T."/>
            <person name="Harmon G."/>
            <person name="Edwards J."/>
            <person name="Latreille P."/>
            <person name="Courtney L."/>
            <person name="Cloud J."/>
            <person name="Abbott A."/>
            <person name="Scott K."/>
            <person name="Johnson D."/>
            <person name="Minx P."/>
            <person name="Bentley D."/>
            <person name="Fulton B."/>
            <person name="Miller N."/>
            <person name="Greco T."/>
            <person name="Kemp K."/>
            <person name="Kramer J."/>
            <person name="Fulton L."/>
            <person name="Mardis E."/>
            <person name="Dante M."/>
            <person name="Pepin K."/>
            <person name="Hillier L.W."/>
            <person name="Nelson J."/>
            <person name="Spieth J."/>
            <person name="Ryan E."/>
            <person name="Andrews S."/>
            <person name="Geisel C."/>
            <person name="Layman D."/>
            <person name="Du H."/>
            <person name="Ali J."/>
            <person name="Berghoff A."/>
            <person name="Jones K."/>
            <person name="Drone K."/>
            <person name="Cotton M."/>
            <person name="Joshu C."/>
            <person name="Antonoiu B."/>
            <person name="Zidanic M."/>
            <person name="Strong C."/>
            <person name="Sun H."/>
            <person name="Lamar B."/>
            <person name="Yordan C."/>
            <person name="Ma P."/>
            <person name="Zhong J."/>
            <person name="Preston R."/>
            <person name="Vil D."/>
            <person name="Shekher M."/>
            <person name="Matero A."/>
            <person name="Shah R."/>
            <person name="Swaby I.K."/>
            <person name="O'Shaughnessy A."/>
            <person name="Rodriguez M."/>
            <person name="Hoffman J."/>
            <person name="Till S."/>
            <person name="Granat S."/>
            <person name="Shohdy N."/>
            <person name="Hasegawa A."/>
            <person name="Hameed A."/>
            <person name="Lodhi M."/>
            <person name="Johnson A."/>
            <person name="Chen E."/>
            <person name="Marra M.A."/>
            <person name="Martienssen R."/>
            <person name="McCombie W.R."/>
        </authorList>
    </citation>
    <scope>NUCLEOTIDE SEQUENCE [LARGE SCALE GENOMIC DNA]</scope>
    <source>
        <strain>cv. Columbia</strain>
    </source>
</reference>
<reference key="2">
    <citation type="journal article" date="2017" name="Plant J.">
        <title>Araport11: a complete reannotation of the Arabidopsis thaliana reference genome.</title>
        <authorList>
            <person name="Cheng C.Y."/>
            <person name="Krishnakumar V."/>
            <person name="Chan A.P."/>
            <person name="Thibaud-Nissen F."/>
            <person name="Schobel S."/>
            <person name="Town C.D."/>
        </authorList>
    </citation>
    <scope>GENOME REANNOTATION</scope>
    <source>
        <strain>cv. Columbia</strain>
    </source>
</reference>
<reference key="3">
    <citation type="submission" date="2006-07" db="EMBL/GenBank/DDBJ databases">
        <title>Large-scale analysis of RIKEN Arabidopsis full-length (RAFL) cDNAs.</title>
        <authorList>
            <person name="Totoki Y."/>
            <person name="Seki M."/>
            <person name="Ishida J."/>
            <person name="Nakajima M."/>
            <person name="Enju A."/>
            <person name="Kamiya A."/>
            <person name="Narusaka M."/>
            <person name="Shin-i T."/>
            <person name="Nakagawa M."/>
            <person name="Sakamoto N."/>
            <person name="Oishi K."/>
            <person name="Kohara Y."/>
            <person name="Kobayashi M."/>
            <person name="Toyoda A."/>
            <person name="Sakaki Y."/>
            <person name="Sakurai T."/>
            <person name="Iida K."/>
            <person name="Akiyama K."/>
            <person name="Satou M."/>
            <person name="Toyoda T."/>
            <person name="Konagaya A."/>
            <person name="Carninci P."/>
            <person name="Kawai J."/>
            <person name="Hayashizaki Y."/>
            <person name="Shinozaki K."/>
        </authorList>
    </citation>
    <scope>NUCLEOTIDE SEQUENCE [LARGE SCALE MRNA] OF 1-776 (ISOFORM 2)</scope>
    <source>
        <strain>cv. Columbia</strain>
    </source>
</reference>
<reference key="4">
    <citation type="journal article" date="2003" name="Plant Physiol.">
        <title>Whole-genome comparison of leucine-rich repeat extensins in Arabidopsis and rice. A conserved family of cell wall proteins form a vegetative and a reproductive clade.</title>
        <authorList>
            <person name="Baumberger N."/>
            <person name="Doesseger B."/>
            <person name="Guyot R."/>
            <person name="Diet A."/>
            <person name="Parsons R.L."/>
            <person name="Clark M.A."/>
            <person name="Simmons M.P."/>
            <person name="Bedinger P."/>
            <person name="Goff S.A."/>
            <person name="Ringli C."/>
            <person name="Keller B."/>
        </authorList>
    </citation>
    <scope>TISSUE SPECIFICITY</scope>
    <scope>DEVELOPMENTAL STAGE</scope>
    <scope>GENE FAMILY</scope>
    <scope>NOMENCLATURE</scope>
</reference>
<organism>
    <name type="scientific">Arabidopsis thaliana</name>
    <name type="common">Mouse-ear cress</name>
    <dbReference type="NCBI Taxonomy" id="3702"/>
    <lineage>
        <taxon>Eukaryota</taxon>
        <taxon>Viridiplantae</taxon>
        <taxon>Streptophyta</taxon>
        <taxon>Embryophyta</taxon>
        <taxon>Tracheophyta</taxon>
        <taxon>Spermatophyta</taxon>
        <taxon>Magnoliopsida</taxon>
        <taxon>eudicotyledons</taxon>
        <taxon>Gunneridae</taxon>
        <taxon>Pentapetalae</taxon>
        <taxon>rosids</taxon>
        <taxon>malvids</taxon>
        <taxon>Brassicales</taxon>
        <taxon>Brassicaceae</taxon>
        <taxon>Camelineae</taxon>
        <taxon>Arabidopsis</taxon>
    </lineage>
</organism>
<dbReference type="EMBL" id="AL035526">
    <property type="protein sequence ID" value="CAB37452.1"/>
    <property type="status" value="ALT_SEQ"/>
    <property type="molecule type" value="Genomic_DNA"/>
</dbReference>
<dbReference type="EMBL" id="AL161549">
    <property type="protein sequence ID" value="CAB78869.1"/>
    <property type="status" value="ALT_SEQ"/>
    <property type="molecule type" value="Genomic_DNA"/>
</dbReference>
<dbReference type="EMBL" id="CP002687">
    <property type="protein sequence ID" value="AEE84074.1"/>
    <property type="molecule type" value="Genomic_DNA"/>
</dbReference>
<dbReference type="EMBL" id="AK228621">
    <property type="status" value="NOT_ANNOTATED_CDS"/>
    <property type="molecule type" value="mRNA"/>
</dbReference>
<dbReference type="PIR" id="T04859">
    <property type="entry name" value="T04859"/>
</dbReference>
<dbReference type="RefSeq" id="NP_193602.4">
    <molecule id="Q9SN46-1"/>
    <property type="nucleotide sequence ID" value="NM_117983.6"/>
</dbReference>
<dbReference type="BioGRID" id="12894">
    <property type="interactions" value="2"/>
</dbReference>
<dbReference type="FunCoup" id="Q9SN46">
    <property type="interactions" value="3"/>
</dbReference>
<dbReference type="STRING" id="3702.Q9SN46"/>
<dbReference type="GlyCosmos" id="Q9SN46">
    <property type="glycosylation" value="3 sites, No reported glycans"/>
</dbReference>
<dbReference type="GlyGen" id="Q9SN46">
    <property type="glycosylation" value="18 sites"/>
</dbReference>
<dbReference type="PaxDb" id="3702-AT4G18670.1"/>
<dbReference type="ProteomicsDB" id="238740">
    <molecule id="Q9SN46-1"/>
</dbReference>
<dbReference type="EnsemblPlants" id="AT4G18670.1">
    <molecule id="Q9SN46-1"/>
    <property type="protein sequence ID" value="AT4G18670.1"/>
    <property type="gene ID" value="AT4G18670"/>
</dbReference>
<dbReference type="GeneID" id="827601"/>
<dbReference type="Gramene" id="AT4G18670.1">
    <molecule id="Q9SN46-1"/>
    <property type="protein sequence ID" value="AT4G18670.1"/>
    <property type="gene ID" value="AT4G18670"/>
</dbReference>
<dbReference type="KEGG" id="ath:AT4G18670"/>
<dbReference type="Araport" id="AT4G18670"/>
<dbReference type="TAIR" id="AT4G18670">
    <property type="gene designation" value="LRX5"/>
</dbReference>
<dbReference type="eggNOG" id="ENOG502QQ2D">
    <property type="taxonomic scope" value="Eukaryota"/>
</dbReference>
<dbReference type="HOGENOM" id="CLU_000288_23_3_1"/>
<dbReference type="InParanoid" id="Q9SN46"/>
<dbReference type="OMA" id="VANNHFH"/>
<dbReference type="PRO" id="PR:Q9SN46"/>
<dbReference type="Proteomes" id="UP000006548">
    <property type="component" value="Chromosome 4"/>
</dbReference>
<dbReference type="ExpressionAtlas" id="Q9SN46">
    <property type="expression patterns" value="baseline and differential"/>
</dbReference>
<dbReference type="GO" id="GO:0005576">
    <property type="term" value="C:extracellular region"/>
    <property type="evidence" value="ECO:0007669"/>
    <property type="project" value="UniProtKB-KW"/>
</dbReference>
<dbReference type="GO" id="GO:0009506">
    <property type="term" value="C:plasmodesma"/>
    <property type="evidence" value="ECO:0007005"/>
    <property type="project" value="TAIR"/>
</dbReference>
<dbReference type="GO" id="GO:0005199">
    <property type="term" value="F:structural constituent of cell wall"/>
    <property type="evidence" value="ECO:0000250"/>
    <property type="project" value="TAIR"/>
</dbReference>
<dbReference type="GO" id="GO:0071555">
    <property type="term" value="P:cell wall organization"/>
    <property type="evidence" value="ECO:0007669"/>
    <property type="project" value="UniProtKB-KW"/>
</dbReference>
<dbReference type="FunFam" id="3.80.10.10:FF:000224">
    <property type="entry name" value="Leucine-rich repeat extensin-like protein 1"/>
    <property type="match status" value="1"/>
</dbReference>
<dbReference type="FunFam" id="3.80.10.10:FF:000631">
    <property type="entry name" value="Leucine-rich repeat extensin-like protein 5"/>
    <property type="match status" value="1"/>
</dbReference>
<dbReference type="Gene3D" id="3.80.10.10">
    <property type="entry name" value="Ribonuclease Inhibitor"/>
    <property type="match status" value="2"/>
</dbReference>
<dbReference type="InterPro" id="IPR001611">
    <property type="entry name" value="Leu-rich_rpt"/>
</dbReference>
<dbReference type="InterPro" id="IPR032675">
    <property type="entry name" value="LRR_dom_sf"/>
</dbReference>
<dbReference type="InterPro" id="IPR051582">
    <property type="entry name" value="LRR_extensin-like_regulator"/>
</dbReference>
<dbReference type="InterPro" id="IPR013210">
    <property type="entry name" value="LRR_N_plant-typ"/>
</dbReference>
<dbReference type="PANTHER" id="PTHR32093">
    <property type="entry name" value="LEUCINE-RICH REPEAT EXTENSIN-LIKE PROTEIN 3-RELATED"/>
    <property type="match status" value="1"/>
</dbReference>
<dbReference type="PANTHER" id="PTHR32093:SF111">
    <property type="entry name" value="LEUCINE-RICH REPEAT EXTENSIN-LIKE PROTEIN 5"/>
    <property type="match status" value="1"/>
</dbReference>
<dbReference type="Pfam" id="PF00560">
    <property type="entry name" value="LRR_1"/>
    <property type="match status" value="1"/>
</dbReference>
<dbReference type="Pfam" id="PF13855">
    <property type="entry name" value="LRR_8"/>
    <property type="match status" value="1"/>
</dbReference>
<dbReference type="Pfam" id="PF08263">
    <property type="entry name" value="LRRNT_2"/>
    <property type="match status" value="1"/>
</dbReference>
<dbReference type="PRINTS" id="PR01217">
    <property type="entry name" value="PRICHEXTENSN"/>
</dbReference>
<dbReference type="SUPFAM" id="SSF52058">
    <property type="entry name" value="L domain-like"/>
    <property type="match status" value="1"/>
</dbReference>
<keyword id="KW-0025">Alternative splicing</keyword>
<keyword id="KW-0134">Cell wall</keyword>
<keyword id="KW-0961">Cell wall biogenesis/degradation</keyword>
<keyword id="KW-0325">Glycoprotein</keyword>
<keyword id="KW-0379">Hydroxylation</keyword>
<keyword id="KW-0433">Leucine-rich repeat</keyword>
<keyword id="KW-1185">Reference proteome</keyword>
<keyword id="KW-0677">Repeat</keyword>
<keyword id="KW-0964">Secreted</keyword>
<keyword id="KW-0732">Signal</keyword>